<reference key="1">
    <citation type="journal article" date="2003" name="Mol. Microbiol.">
        <title>Genome-based analysis of virulence genes in a non-biofilm-forming Staphylococcus epidermidis strain (ATCC 12228).</title>
        <authorList>
            <person name="Zhang Y.-Q."/>
            <person name="Ren S.-X."/>
            <person name="Li H.-L."/>
            <person name="Wang Y.-X."/>
            <person name="Fu G."/>
            <person name="Yang J."/>
            <person name="Qin Z.-Q."/>
            <person name="Miao Y.-G."/>
            <person name="Wang W.-Y."/>
            <person name="Chen R.-S."/>
            <person name="Shen Y."/>
            <person name="Chen Z."/>
            <person name="Yuan Z.-H."/>
            <person name="Zhao G.-P."/>
            <person name="Qu D."/>
            <person name="Danchin A."/>
            <person name="Wen Y.-M."/>
        </authorList>
    </citation>
    <scope>NUCLEOTIDE SEQUENCE [LARGE SCALE GENOMIC DNA]</scope>
    <source>
        <strain>ATCC 12228 / FDA PCI 1200</strain>
    </source>
</reference>
<proteinExistence type="inferred from homology"/>
<gene>
    <name type="primary">merB</name>
    <name type="ordered locus">SE_0086</name>
</gene>
<name>MERB_STAES</name>
<keyword id="KW-0456">Lyase</keyword>
<keyword id="KW-0475">Mercuric resistance</keyword>
<keyword id="KW-0476">Mercury</keyword>
<accession>Q8CU52</accession>
<feature type="chain" id="PRO_0000220362" description="Alkylmercury lyase">
    <location>
        <begin position="1"/>
        <end position="216"/>
    </location>
</feature>
<protein>
    <recommendedName>
        <fullName>Alkylmercury lyase</fullName>
        <ecNumber>4.99.1.2</ecNumber>
    </recommendedName>
    <alternativeName>
        <fullName>Organomercurial lyase</fullName>
    </alternativeName>
</protein>
<sequence length="216" mass="23595">MKNISEFSAQLNQTFDQGEAVSMEWLFRPLLKMLAEGDPVPVEDIAAETGKPVEEVKQVLQTLPSVELDEQGRVVGYGLTLVPTPHRFEVDGKQLYAWCALDTLMFPALIGRTVHIASPCHGTGKSVRLTVEPDRVVSVEPSTAVVSIVTPDEMASVRSAFCNNVHFFSSPSAAQDWLNQHPESSVLPVEDAFELGRHLGARYEESGPTNGSCCNI</sequence>
<comment type="function">
    <text evidence="1">Cleaves the carbon-mercury bond of organomercurials such as phenylmercuric acetate. One product is Hg(2+), which is subsequently detoxified by the mercuric reductase (By similarity).</text>
</comment>
<comment type="catalytic activity">
    <reaction>
        <text>an alkylmercury + H(+) = an alkane + Hg(2+)</text>
        <dbReference type="Rhea" id="RHEA:18777"/>
        <dbReference type="ChEBI" id="CHEBI:15378"/>
        <dbReference type="ChEBI" id="CHEBI:16793"/>
        <dbReference type="ChEBI" id="CHEBI:18310"/>
        <dbReference type="ChEBI" id="CHEBI:83725"/>
        <dbReference type="EC" id="4.99.1.2"/>
    </reaction>
</comment>
<comment type="similarity">
    <text evidence="2">Belongs to the MerB family.</text>
</comment>
<evidence type="ECO:0000250" key="1"/>
<evidence type="ECO:0000305" key="2"/>
<dbReference type="EC" id="4.99.1.2"/>
<dbReference type="EMBL" id="AE015929">
    <property type="protein sequence ID" value="AAO03683.1"/>
    <property type="molecule type" value="Genomic_DNA"/>
</dbReference>
<dbReference type="RefSeq" id="NP_763641.1">
    <property type="nucleotide sequence ID" value="NC_004461.1"/>
</dbReference>
<dbReference type="RefSeq" id="WP_000790334.1">
    <property type="nucleotide sequence ID" value="NZ_WBME01000076.1"/>
</dbReference>
<dbReference type="SMR" id="Q8CU52"/>
<dbReference type="GeneID" id="50017514"/>
<dbReference type="KEGG" id="sep:SE_0086"/>
<dbReference type="PATRIC" id="fig|176280.10.peg.82"/>
<dbReference type="eggNOG" id="COG1249">
    <property type="taxonomic scope" value="Bacteria"/>
</dbReference>
<dbReference type="HOGENOM" id="CLU_101685_0_0_9"/>
<dbReference type="OrthoDB" id="7185309at2"/>
<dbReference type="Proteomes" id="UP000001411">
    <property type="component" value="Chromosome"/>
</dbReference>
<dbReference type="GO" id="GO:0018836">
    <property type="term" value="F:alkylmercury lyase activity"/>
    <property type="evidence" value="ECO:0007669"/>
    <property type="project" value="UniProtKB-UniRule"/>
</dbReference>
<dbReference type="GO" id="GO:0046689">
    <property type="term" value="P:response to mercury ion"/>
    <property type="evidence" value="ECO:0007669"/>
    <property type="project" value="UniProtKB-UniRule"/>
</dbReference>
<dbReference type="Gene3D" id="3.30.450.410">
    <property type="match status" value="1"/>
</dbReference>
<dbReference type="HAMAP" id="MF_00714">
    <property type="entry name" value="MerB"/>
    <property type="match status" value="1"/>
</dbReference>
<dbReference type="InterPro" id="IPR004927">
    <property type="entry name" value="MerB"/>
</dbReference>
<dbReference type="InterPro" id="IPR024259">
    <property type="entry name" value="MerB_HTH_dom"/>
</dbReference>
<dbReference type="InterPro" id="IPR053717">
    <property type="entry name" value="MerB_lyase_sf"/>
</dbReference>
<dbReference type="InterPro" id="IPR036390">
    <property type="entry name" value="WH_DNA-bd_sf"/>
</dbReference>
<dbReference type="NCBIfam" id="NF033555">
    <property type="entry name" value="lyase_MerB"/>
    <property type="match status" value="1"/>
</dbReference>
<dbReference type="NCBIfam" id="NF009710">
    <property type="entry name" value="PRK13239.1"/>
    <property type="match status" value="1"/>
</dbReference>
<dbReference type="Pfam" id="PF12324">
    <property type="entry name" value="HTH_15"/>
    <property type="match status" value="1"/>
</dbReference>
<dbReference type="Pfam" id="PF03243">
    <property type="entry name" value="MerB"/>
    <property type="match status" value="1"/>
</dbReference>
<dbReference type="PIRSF" id="PIRSF001458">
    <property type="entry name" value="MerB"/>
    <property type="match status" value="1"/>
</dbReference>
<dbReference type="PRINTS" id="PR01699">
    <property type="entry name" value="ORGNOHGLYASE"/>
</dbReference>
<dbReference type="SUPFAM" id="SSF160387">
    <property type="entry name" value="NosL/MerB-like"/>
    <property type="match status" value="1"/>
</dbReference>
<dbReference type="SUPFAM" id="SSF46785">
    <property type="entry name" value="Winged helix' DNA-binding domain"/>
    <property type="match status" value="1"/>
</dbReference>
<organism>
    <name type="scientific">Staphylococcus epidermidis (strain ATCC 12228 / FDA PCI 1200)</name>
    <dbReference type="NCBI Taxonomy" id="176280"/>
    <lineage>
        <taxon>Bacteria</taxon>
        <taxon>Bacillati</taxon>
        <taxon>Bacillota</taxon>
        <taxon>Bacilli</taxon>
        <taxon>Bacillales</taxon>
        <taxon>Staphylococcaceae</taxon>
        <taxon>Staphylococcus</taxon>
    </lineage>
</organism>